<sequence>MMTHWPSPAKLNLFLYITGQRADGYHTLQTLFQFLDYGDTLHIEPRHDGEIHLLTPVNGVENEDNLIVRAARLLMKVASESGRLPAGSGADISIEKRLPMGGGLGGGSSNAATVLVALNHLWQCGLSIDELATLGLTLGADVPVFVRGHAAFAEGVGEILTPVNPPEKWYLVAHPGVSIPTPVIFKDPQLPRNTPKRSIDTLLKCEFSNDCEVIARKRFREVDAALSWLLEYAPSRLTGTGACVFAEFDTESCARQVLEQAPEWLNAFVAKGVNLSPLHRELL</sequence>
<protein>
    <recommendedName>
        <fullName>4-diphosphocytidyl-2-C-methyl-D-erythritol kinase</fullName>
        <shortName>CMK</shortName>
        <ecNumber>2.7.1.148</ecNumber>
    </recommendedName>
    <alternativeName>
        <fullName>4-(cytidine-5'-diphospho)-2-C-methyl-D-erythritol kinase</fullName>
    </alternativeName>
</protein>
<name>ISPE_SALTY</name>
<reference key="1">
    <citation type="journal article" date="1993" name="J. Gen. Microbiol.">
        <title>Characterization of the hemA-prs region of the Escherichia coli and Salmonella typhimurium chromosomes: identification of two open reading frames and implications for prs expression.</title>
        <authorList>
            <person name="Post D.A."/>
            <person name="Hove-Jensen B."/>
            <person name="Switzer R.L."/>
        </authorList>
    </citation>
    <scope>NUCLEOTIDE SEQUENCE [GENOMIC DNA]</scope>
</reference>
<reference key="2">
    <citation type="journal article" date="2001" name="Nature">
        <title>Complete genome sequence of Salmonella enterica serovar Typhimurium LT2.</title>
        <authorList>
            <person name="McClelland M."/>
            <person name="Sanderson K.E."/>
            <person name="Spieth J."/>
            <person name="Clifton S.W."/>
            <person name="Latreille P."/>
            <person name="Courtney L."/>
            <person name="Porwollik S."/>
            <person name="Ali J."/>
            <person name="Dante M."/>
            <person name="Du F."/>
            <person name="Hou S."/>
            <person name="Layman D."/>
            <person name="Leonard S."/>
            <person name="Nguyen C."/>
            <person name="Scott K."/>
            <person name="Holmes A."/>
            <person name="Grewal N."/>
            <person name="Mulvaney E."/>
            <person name="Ryan E."/>
            <person name="Sun H."/>
            <person name="Florea L."/>
            <person name="Miller W."/>
            <person name="Stoneking T."/>
            <person name="Nhan M."/>
            <person name="Waterston R."/>
            <person name="Wilson R.K."/>
        </authorList>
    </citation>
    <scope>NUCLEOTIDE SEQUENCE [LARGE SCALE GENOMIC DNA]</scope>
    <source>
        <strain>LT2 / SGSC1412 / ATCC 700720</strain>
    </source>
</reference>
<reference key="3">
    <citation type="journal article" date="1988" name="J. Bacteriol.">
        <title>Structure of the gene encoding phosphoribosylpyrophosphate synthetase (prsA) in Salmonella typhimurium.</title>
        <authorList>
            <person name="Bower S.G."/>
            <person name="Hove-Jensen B."/>
            <person name="Switzer R.L."/>
        </authorList>
    </citation>
    <scope>NUCLEOTIDE SEQUENCE [GENOMIC DNA] OF 187-283</scope>
</reference>
<proteinExistence type="inferred from homology"/>
<organism>
    <name type="scientific">Salmonella typhimurium (strain LT2 / SGSC1412 / ATCC 700720)</name>
    <dbReference type="NCBI Taxonomy" id="99287"/>
    <lineage>
        <taxon>Bacteria</taxon>
        <taxon>Pseudomonadati</taxon>
        <taxon>Pseudomonadota</taxon>
        <taxon>Gammaproteobacteria</taxon>
        <taxon>Enterobacterales</taxon>
        <taxon>Enterobacteriaceae</taxon>
        <taxon>Salmonella</taxon>
    </lineage>
</organism>
<accession>P30753</accession>
<evidence type="ECO:0000250" key="1"/>
<evidence type="ECO:0000255" key="2"/>
<evidence type="ECO:0000305" key="3"/>
<dbReference type="EC" id="2.7.1.148"/>
<dbReference type="EMBL" id="M77236">
    <property type="protein sequence ID" value="AAA27195.1"/>
    <property type="molecule type" value="Genomic_DNA"/>
</dbReference>
<dbReference type="EMBL" id="AE006468">
    <property type="protein sequence ID" value="AAL20694.1"/>
    <property type="molecule type" value="Genomic_DNA"/>
</dbReference>
<dbReference type="EMBL" id="M19488">
    <property type="status" value="NOT_ANNOTATED_CDS"/>
    <property type="molecule type" value="Genomic_DNA"/>
</dbReference>
<dbReference type="PIR" id="S27732">
    <property type="entry name" value="S27732"/>
</dbReference>
<dbReference type="RefSeq" id="NP_460735.1">
    <property type="nucleotide sequence ID" value="NC_003197.2"/>
</dbReference>
<dbReference type="RefSeq" id="WP_000988246.1">
    <property type="nucleotide sequence ID" value="NC_003197.2"/>
</dbReference>
<dbReference type="SMR" id="P30753"/>
<dbReference type="STRING" id="99287.STM1779"/>
<dbReference type="PaxDb" id="99287-STM1779"/>
<dbReference type="GeneID" id="1253298"/>
<dbReference type="KEGG" id="stm:STM1779"/>
<dbReference type="PATRIC" id="fig|99287.12.peg.1875"/>
<dbReference type="HOGENOM" id="CLU_053057_3_0_6"/>
<dbReference type="OMA" id="RWPSPAK"/>
<dbReference type="PhylomeDB" id="P30753"/>
<dbReference type="BioCyc" id="SENT99287:STM1779-MONOMER"/>
<dbReference type="UniPathway" id="UPA00056">
    <property type="reaction ID" value="UER00094"/>
</dbReference>
<dbReference type="Proteomes" id="UP000001014">
    <property type="component" value="Chromosome"/>
</dbReference>
<dbReference type="GO" id="GO:0050515">
    <property type="term" value="F:4-(cytidine 5'-diphospho)-2-C-methyl-D-erythritol kinase activity"/>
    <property type="evidence" value="ECO:0000318"/>
    <property type="project" value="GO_Central"/>
</dbReference>
<dbReference type="GO" id="GO:0005524">
    <property type="term" value="F:ATP binding"/>
    <property type="evidence" value="ECO:0007669"/>
    <property type="project" value="UniProtKB-UniRule"/>
</dbReference>
<dbReference type="GO" id="GO:0019288">
    <property type="term" value="P:isopentenyl diphosphate biosynthetic process, methylerythritol 4-phosphate pathway"/>
    <property type="evidence" value="ECO:0007669"/>
    <property type="project" value="UniProtKB-UniRule"/>
</dbReference>
<dbReference type="GO" id="GO:0016114">
    <property type="term" value="P:terpenoid biosynthetic process"/>
    <property type="evidence" value="ECO:0007669"/>
    <property type="project" value="InterPro"/>
</dbReference>
<dbReference type="FunFam" id="3.30.230.10:FF:000022">
    <property type="entry name" value="4-diphosphocytidyl-2-C-methyl-D-erythritol kinase"/>
    <property type="match status" value="1"/>
</dbReference>
<dbReference type="FunFam" id="3.30.70.890:FF:000004">
    <property type="entry name" value="4-diphosphocytidyl-2-C-methyl-D-erythritol kinase"/>
    <property type="match status" value="1"/>
</dbReference>
<dbReference type="Gene3D" id="3.30.230.10">
    <property type="match status" value="1"/>
</dbReference>
<dbReference type="Gene3D" id="3.30.70.890">
    <property type="entry name" value="GHMP kinase, C-terminal domain"/>
    <property type="match status" value="1"/>
</dbReference>
<dbReference type="HAMAP" id="MF_00061">
    <property type="entry name" value="IspE"/>
    <property type="match status" value="1"/>
</dbReference>
<dbReference type="InterPro" id="IPR013750">
    <property type="entry name" value="GHMP_kinase_C_dom"/>
</dbReference>
<dbReference type="InterPro" id="IPR036554">
    <property type="entry name" value="GHMP_kinase_C_sf"/>
</dbReference>
<dbReference type="InterPro" id="IPR006204">
    <property type="entry name" value="GHMP_kinase_N_dom"/>
</dbReference>
<dbReference type="InterPro" id="IPR004424">
    <property type="entry name" value="IspE"/>
</dbReference>
<dbReference type="InterPro" id="IPR020568">
    <property type="entry name" value="Ribosomal_Su5_D2-typ_SF"/>
</dbReference>
<dbReference type="InterPro" id="IPR014721">
    <property type="entry name" value="Ribsml_uS5_D2-typ_fold_subgr"/>
</dbReference>
<dbReference type="NCBIfam" id="TIGR00154">
    <property type="entry name" value="ispE"/>
    <property type="match status" value="1"/>
</dbReference>
<dbReference type="PANTHER" id="PTHR43527">
    <property type="entry name" value="4-DIPHOSPHOCYTIDYL-2-C-METHYL-D-ERYTHRITOL KINASE, CHLOROPLASTIC"/>
    <property type="match status" value="1"/>
</dbReference>
<dbReference type="PANTHER" id="PTHR43527:SF2">
    <property type="entry name" value="4-DIPHOSPHOCYTIDYL-2-C-METHYL-D-ERYTHRITOL KINASE, CHLOROPLASTIC"/>
    <property type="match status" value="1"/>
</dbReference>
<dbReference type="Pfam" id="PF08544">
    <property type="entry name" value="GHMP_kinases_C"/>
    <property type="match status" value="1"/>
</dbReference>
<dbReference type="Pfam" id="PF00288">
    <property type="entry name" value="GHMP_kinases_N"/>
    <property type="match status" value="1"/>
</dbReference>
<dbReference type="PIRSF" id="PIRSF010376">
    <property type="entry name" value="IspE"/>
    <property type="match status" value="1"/>
</dbReference>
<dbReference type="SUPFAM" id="SSF55060">
    <property type="entry name" value="GHMP Kinase, C-terminal domain"/>
    <property type="match status" value="1"/>
</dbReference>
<dbReference type="SUPFAM" id="SSF54211">
    <property type="entry name" value="Ribosomal protein S5 domain 2-like"/>
    <property type="match status" value="1"/>
</dbReference>
<comment type="function">
    <text evidence="1">Catalyzes the phosphorylation of the position 2 hydroxy group of 4-diphosphocytidyl-2C-methyl-D-erythritol.</text>
</comment>
<comment type="catalytic activity">
    <reaction>
        <text>4-CDP-2-C-methyl-D-erythritol + ATP = 4-CDP-2-C-methyl-D-erythritol 2-phosphate + ADP + H(+)</text>
        <dbReference type="Rhea" id="RHEA:18437"/>
        <dbReference type="ChEBI" id="CHEBI:15378"/>
        <dbReference type="ChEBI" id="CHEBI:30616"/>
        <dbReference type="ChEBI" id="CHEBI:57823"/>
        <dbReference type="ChEBI" id="CHEBI:57919"/>
        <dbReference type="ChEBI" id="CHEBI:456216"/>
        <dbReference type="EC" id="2.7.1.148"/>
    </reaction>
</comment>
<comment type="pathway">
    <text>Isoprenoid biosynthesis; isopentenyl diphosphate biosynthesis via DXP pathway; isopentenyl diphosphate from 1-deoxy-D-xylulose 5-phosphate: step 3/6.</text>
</comment>
<comment type="subunit">
    <text evidence="1">Homodimer.</text>
</comment>
<comment type="similarity">
    <text evidence="3">Belongs to the GHMP kinase family. IspE subfamily.</text>
</comment>
<comment type="sequence caution" evidence="3">
    <conflict type="frameshift">
        <sequence resource="EMBL" id="M19488"/>
    </conflict>
</comment>
<keyword id="KW-0067">ATP-binding</keyword>
<keyword id="KW-0414">Isoprene biosynthesis</keyword>
<keyword id="KW-0418">Kinase</keyword>
<keyword id="KW-0547">Nucleotide-binding</keyword>
<keyword id="KW-1185">Reference proteome</keyword>
<keyword id="KW-0808">Transferase</keyword>
<gene>
    <name type="primary">ispE</name>
    <name type="synonym">ipk</name>
    <name type="ordered locus">STM1779</name>
</gene>
<feature type="chain" id="PRO_0000189258" description="4-diphosphocytidyl-2-C-methyl-D-erythritol kinase">
    <location>
        <begin position="1"/>
        <end position="283"/>
    </location>
</feature>
<feature type="active site" evidence="1">
    <location>
        <position position="10"/>
    </location>
</feature>
<feature type="active site" evidence="1">
    <location>
        <position position="141"/>
    </location>
</feature>
<feature type="binding site" evidence="2">
    <location>
        <begin position="99"/>
        <end position="109"/>
    </location>
    <ligand>
        <name>ATP</name>
        <dbReference type="ChEBI" id="CHEBI:30616"/>
    </ligand>
</feature>
<feature type="sequence conflict" description="In Ref. 3." evidence="3" ref="3">
    <original>S</original>
    <variation>L</variation>
    <location>
        <position position="252"/>
    </location>
</feature>